<proteinExistence type="inferred from homology"/>
<dbReference type="EMBL" id="CP001635">
    <property type="protein sequence ID" value="ACS19265.1"/>
    <property type="molecule type" value="Genomic_DNA"/>
</dbReference>
<dbReference type="SMR" id="C5CKW1"/>
<dbReference type="STRING" id="543728.Vapar_2640"/>
<dbReference type="KEGG" id="vap:Vapar_2640"/>
<dbReference type="eggNOG" id="COG2835">
    <property type="taxonomic scope" value="Bacteria"/>
</dbReference>
<dbReference type="HOGENOM" id="CLU_155659_3_1_4"/>
<dbReference type="OrthoDB" id="9812205at2"/>
<dbReference type="GO" id="GO:0005829">
    <property type="term" value="C:cytosol"/>
    <property type="evidence" value="ECO:0007669"/>
    <property type="project" value="TreeGrafter"/>
</dbReference>
<dbReference type="FunFam" id="2.20.25.10:FF:000002">
    <property type="entry name" value="UPF0434 protein YcaR"/>
    <property type="match status" value="1"/>
</dbReference>
<dbReference type="Gene3D" id="2.20.25.10">
    <property type="match status" value="1"/>
</dbReference>
<dbReference type="HAMAP" id="MF_01187">
    <property type="entry name" value="UPF0434"/>
    <property type="match status" value="1"/>
</dbReference>
<dbReference type="InterPro" id="IPR005651">
    <property type="entry name" value="Trm112-like"/>
</dbReference>
<dbReference type="PANTHER" id="PTHR33505:SF4">
    <property type="entry name" value="PROTEIN PREY, MITOCHONDRIAL"/>
    <property type="match status" value="1"/>
</dbReference>
<dbReference type="PANTHER" id="PTHR33505">
    <property type="entry name" value="ZGC:162634"/>
    <property type="match status" value="1"/>
</dbReference>
<dbReference type="Pfam" id="PF03966">
    <property type="entry name" value="Trm112p"/>
    <property type="match status" value="1"/>
</dbReference>
<dbReference type="SUPFAM" id="SSF158997">
    <property type="entry name" value="Trm112p-like"/>
    <property type="match status" value="1"/>
</dbReference>
<comment type="similarity">
    <text evidence="1">Belongs to the UPF0434 family.</text>
</comment>
<accession>C5CKW1</accession>
<gene>
    <name type="ordered locus">Vapar_2640</name>
</gene>
<evidence type="ECO:0000255" key="1">
    <source>
        <dbReference type="HAMAP-Rule" id="MF_01187"/>
    </source>
</evidence>
<reference key="1">
    <citation type="journal article" date="2011" name="J. Bacteriol.">
        <title>Complete genome sequence of the metabolically versatile plant growth-promoting endophyte, Variovorax paradoxus S110.</title>
        <authorList>
            <person name="Han J.I."/>
            <person name="Choi H.K."/>
            <person name="Lee S.W."/>
            <person name="Orwin P.M."/>
            <person name="Kim J."/>
            <person name="Laroe S.L."/>
            <person name="Kim T.G."/>
            <person name="O'Neil J."/>
            <person name="Leadbetter J.R."/>
            <person name="Lee S.Y."/>
            <person name="Hur C.G."/>
            <person name="Spain J.C."/>
            <person name="Ovchinnikova G."/>
            <person name="Goodwin L."/>
            <person name="Han C."/>
        </authorList>
    </citation>
    <scope>NUCLEOTIDE SEQUENCE [LARGE SCALE GENOMIC DNA]</scope>
    <source>
        <strain>S110</strain>
    </source>
</reference>
<name>Y2640_VARPS</name>
<organism>
    <name type="scientific">Variovorax paradoxus (strain S110)</name>
    <dbReference type="NCBI Taxonomy" id="543728"/>
    <lineage>
        <taxon>Bacteria</taxon>
        <taxon>Pseudomonadati</taxon>
        <taxon>Pseudomonadota</taxon>
        <taxon>Betaproteobacteria</taxon>
        <taxon>Burkholderiales</taxon>
        <taxon>Comamonadaceae</taxon>
        <taxon>Variovorax</taxon>
    </lineage>
</organism>
<sequence length="60" mass="6723">MDTKLLELLVCPVTKGPLTWNPEKQELCSRSARLAYPVRDGIPVLLENEARTLSDEELGL</sequence>
<feature type="chain" id="PRO_1000213788" description="UPF0434 protein Vapar_2640">
    <location>
        <begin position="1"/>
        <end position="60"/>
    </location>
</feature>
<protein>
    <recommendedName>
        <fullName evidence="1">UPF0434 protein Vapar_2640</fullName>
    </recommendedName>
</protein>